<accession>Q31BS3</accession>
<keyword id="KW-0012">Acyltransferase</keyword>
<keyword id="KW-0133">Cell shape</keyword>
<keyword id="KW-0961">Cell wall biogenesis/degradation</keyword>
<keyword id="KW-0963">Cytoplasm</keyword>
<keyword id="KW-0460">Magnesium</keyword>
<keyword id="KW-0479">Metal-binding</keyword>
<keyword id="KW-0511">Multifunctional enzyme</keyword>
<keyword id="KW-0548">Nucleotidyltransferase</keyword>
<keyword id="KW-0573">Peptidoglycan synthesis</keyword>
<keyword id="KW-0677">Repeat</keyword>
<keyword id="KW-0808">Transferase</keyword>
<proteinExistence type="inferred from homology"/>
<sequence length="449" mass="49612">MLSVAILAAGKGTRMESSIPKVLHKISGKSLLQRVIDSCVELNPDQIFVITGHKSKEVQESIPDNKKIHFVIQEPQSGTGHAIQILCREVKKNEGKLLVLNGDVPLITPETLKNLLNLHDSKNADVSLITTKKKNPHGYGRVFLKGDFIERIVEEKDCNNQERLNLLINAGVYCFNWENLSEIISTLQSNNNQNEIYLTDTVSMLKNALSLEIEDNGELQGINNRIQLSKCEEIIQNSIKEKHMLNGVTFINQASCSISEEAEIGKDVIIEANTHIRGSTKIFNSCVIGPNTFIENSNIGLHCEISNSTVYDSQIMDHIKVGPYSHIRPKSKIYSYSKIGNFVEIKNSQLEEESKVNHLSYIGDSIIGRSTNIGAGTITANFDGQKKHQTKIGKNSSIGANTVLVAPINLGESVTTGAGSVITKDSKDNSLAISRTKQVNIDNWERKKP</sequence>
<protein>
    <recommendedName>
        <fullName evidence="1">Bifunctional protein GlmU</fullName>
    </recommendedName>
    <domain>
        <recommendedName>
            <fullName evidence="1">UDP-N-acetylglucosamine pyrophosphorylase</fullName>
            <ecNumber evidence="1">2.7.7.23</ecNumber>
        </recommendedName>
        <alternativeName>
            <fullName evidence="1">N-acetylglucosamine-1-phosphate uridyltransferase</fullName>
        </alternativeName>
    </domain>
    <domain>
        <recommendedName>
            <fullName evidence="1">Glucosamine-1-phosphate N-acetyltransferase</fullName>
            <ecNumber evidence="1">2.3.1.157</ecNumber>
        </recommendedName>
    </domain>
</protein>
<evidence type="ECO:0000255" key="1">
    <source>
        <dbReference type="HAMAP-Rule" id="MF_01631"/>
    </source>
</evidence>
<name>GLMU_PROM9</name>
<comment type="function">
    <text evidence="1">Catalyzes the last two sequential reactions in the de novo biosynthetic pathway for UDP-N-acetylglucosamine (UDP-GlcNAc). The C-terminal domain catalyzes the transfer of acetyl group from acetyl coenzyme A to glucosamine-1-phosphate (GlcN-1-P) to produce N-acetylglucosamine-1-phosphate (GlcNAc-1-P), which is converted into UDP-GlcNAc by the transfer of uridine 5-monophosphate (from uridine 5-triphosphate), a reaction catalyzed by the N-terminal domain.</text>
</comment>
<comment type="catalytic activity">
    <reaction evidence="1">
        <text>alpha-D-glucosamine 1-phosphate + acetyl-CoA = N-acetyl-alpha-D-glucosamine 1-phosphate + CoA + H(+)</text>
        <dbReference type="Rhea" id="RHEA:13725"/>
        <dbReference type="ChEBI" id="CHEBI:15378"/>
        <dbReference type="ChEBI" id="CHEBI:57287"/>
        <dbReference type="ChEBI" id="CHEBI:57288"/>
        <dbReference type="ChEBI" id="CHEBI:57776"/>
        <dbReference type="ChEBI" id="CHEBI:58516"/>
        <dbReference type="EC" id="2.3.1.157"/>
    </reaction>
</comment>
<comment type="catalytic activity">
    <reaction evidence="1">
        <text>N-acetyl-alpha-D-glucosamine 1-phosphate + UTP + H(+) = UDP-N-acetyl-alpha-D-glucosamine + diphosphate</text>
        <dbReference type="Rhea" id="RHEA:13509"/>
        <dbReference type="ChEBI" id="CHEBI:15378"/>
        <dbReference type="ChEBI" id="CHEBI:33019"/>
        <dbReference type="ChEBI" id="CHEBI:46398"/>
        <dbReference type="ChEBI" id="CHEBI:57705"/>
        <dbReference type="ChEBI" id="CHEBI:57776"/>
        <dbReference type="EC" id="2.7.7.23"/>
    </reaction>
</comment>
<comment type="cofactor">
    <cofactor evidence="1">
        <name>Mg(2+)</name>
        <dbReference type="ChEBI" id="CHEBI:18420"/>
    </cofactor>
    <text evidence="1">Binds 1 Mg(2+) ion per subunit.</text>
</comment>
<comment type="pathway">
    <text evidence="1">Nucleotide-sugar biosynthesis; UDP-N-acetyl-alpha-D-glucosamine biosynthesis; N-acetyl-alpha-D-glucosamine 1-phosphate from alpha-D-glucosamine 6-phosphate (route II): step 2/2.</text>
</comment>
<comment type="pathway">
    <text evidence="1">Nucleotide-sugar biosynthesis; UDP-N-acetyl-alpha-D-glucosamine biosynthesis; UDP-N-acetyl-alpha-D-glucosamine from N-acetyl-alpha-D-glucosamine 1-phosphate: step 1/1.</text>
</comment>
<comment type="pathway">
    <text evidence="1">Bacterial outer membrane biogenesis; LPS lipid A biosynthesis.</text>
</comment>
<comment type="subunit">
    <text evidence="1">Homotrimer.</text>
</comment>
<comment type="subcellular location">
    <subcellularLocation>
        <location evidence="1">Cytoplasm</location>
    </subcellularLocation>
</comment>
<comment type="similarity">
    <text evidence="1">In the N-terminal section; belongs to the N-acetylglucosamine-1-phosphate uridyltransferase family.</text>
</comment>
<comment type="similarity">
    <text evidence="1">In the C-terminal section; belongs to the transferase hexapeptide repeat family.</text>
</comment>
<gene>
    <name evidence="1" type="primary">glmU</name>
    <name type="ordered locus">PMT9312_0611</name>
</gene>
<dbReference type="EC" id="2.7.7.23" evidence="1"/>
<dbReference type="EC" id="2.3.1.157" evidence="1"/>
<dbReference type="EMBL" id="CP000111">
    <property type="protein sequence ID" value="ABB49672.1"/>
    <property type="molecule type" value="Genomic_DNA"/>
</dbReference>
<dbReference type="RefSeq" id="WP_011376167.1">
    <property type="nucleotide sequence ID" value="NC_007577.1"/>
</dbReference>
<dbReference type="SMR" id="Q31BS3"/>
<dbReference type="STRING" id="74546.PMT9312_0611"/>
<dbReference type="KEGG" id="pmi:PMT9312_0611"/>
<dbReference type="eggNOG" id="COG1207">
    <property type="taxonomic scope" value="Bacteria"/>
</dbReference>
<dbReference type="HOGENOM" id="CLU_029499_15_2_3"/>
<dbReference type="OrthoDB" id="9775031at2"/>
<dbReference type="UniPathway" id="UPA00113">
    <property type="reaction ID" value="UER00532"/>
</dbReference>
<dbReference type="UniPathway" id="UPA00113">
    <property type="reaction ID" value="UER00533"/>
</dbReference>
<dbReference type="UniPathway" id="UPA00973"/>
<dbReference type="Proteomes" id="UP000002715">
    <property type="component" value="Chromosome"/>
</dbReference>
<dbReference type="GO" id="GO:0031470">
    <property type="term" value="C:carboxysome"/>
    <property type="evidence" value="ECO:0007669"/>
    <property type="project" value="UniProtKB-ARBA"/>
</dbReference>
<dbReference type="GO" id="GO:0005737">
    <property type="term" value="C:cytoplasm"/>
    <property type="evidence" value="ECO:0007669"/>
    <property type="project" value="UniProtKB-SubCell"/>
</dbReference>
<dbReference type="GO" id="GO:0016020">
    <property type="term" value="C:membrane"/>
    <property type="evidence" value="ECO:0007669"/>
    <property type="project" value="GOC"/>
</dbReference>
<dbReference type="GO" id="GO:0019134">
    <property type="term" value="F:glucosamine-1-phosphate N-acetyltransferase activity"/>
    <property type="evidence" value="ECO:0007669"/>
    <property type="project" value="UniProtKB-UniRule"/>
</dbReference>
<dbReference type="GO" id="GO:0000287">
    <property type="term" value="F:magnesium ion binding"/>
    <property type="evidence" value="ECO:0007669"/>
    <property type="project" value="UniProtKB-UniRule"/>
</dbReference>
<dbReference type="GO" id="GO:0043886">
    <property type="term" value="F:structural constituent of carboxysome shell"/>
    <property type="evidence" value="ECO:0007669"/>
    <property type="project" value="UniProtKB-ARBA"/>
</dbReference>
<dbReference type="GO" id="GO:0003977">
    <property type="term" value="F:UDP-N-acetylglucosamine diphosphorylase activity"/>
    <property type="evidence" value="ECO:0007669"/>
    <property type="project" value="UniProtKB-UniRule"/>
</dbReference>
<dbReference type="GO" id="GO:0000902">
    <property type="term" value="P:cell morphogenesis"/>
    <property type="evidence" value="ECO:0007669"/>
    <property type="project" value="UniProtKB-UniRule"/>
</dbReference>
<dbReference type="GO" id="GO:0071555">
    <property type="term" value="P:cell wall organization"/>
    <property type="evidence" value="ECO:0007669"/>
    <property type="project" value="UniProtKB-KW"/>
</dbReference>
<dbReference type="GO" id="GO:0009245">
    <property type="term" value="P:lipid A biosynthetic process"/>
    <property type="evidence" value="ECO:0007669"/>
    <property type="project" value="UniProtKB-UniRule"/>
</dbReference>
<dbReference type="GO" id="GO:0009252">
    <property type="term" value="P:peptidoglycan biosynthetic process"/>
    <property type="evidence" value="ECO:0007669"/>
    <property type="project" value="UniProtKB-UniRule"/>
</dbReference>
<dbReference type="GO" id="GO:0008360">
    <property type="term" value="P:regulation of cell shape"/>
    <property type="evidence" value="ECO:0007669"/>
    <property type="project" value="UniProtKB-KW"/>
</dbReference>
<dbReference type="GO" id="GO:0006048">
    <property type="term" value="P:UDP-N-acetylglucosamine biosynthetic process"/>
    <property type="evidence" value="ECO:0007669"/>
    <property type="project" value="UniProtKB-UniPathway"/>
</dbReference>
<dbReference type="CDD" id="cd02540">
    <property type="entry name" value="GT2_GlmU_N_bac"/>
    <property type="match status" value="1"/>
</dbReference>
<dbReference type="CDD" id="cd03353">
    <property type="entry name" value="LbH_GlmU_C"/>
    <property type="match status" value="1"/>
</dbReference>
<dbReference type="Gene3D" id="2.160.10.10">
    <property type="entry name" value="Hexapeptide repeat proteins"/>
    <property type="match status" value="1"/>
</dbReference>
<dbReference type="Gene3D" id="3.90.550.10">
    <property type="entry name" value="Spore Coat Polysaccharide Biosynthesis Protein SpsA, Chain A"/>
    <property type="match status" value="1"/>
</dbReference>
<dbReference type="HAMAP" id="MF_01631">
    <property type="entry name" value="GlmU"/>
    <property type="match status" value="1"/>
</dbReference>
<dbReference type="InterPro" id="IPR005882">
    <property type="entry name" value="Bifunctional_GlmU"/>
</dbReference>
<dbReference type="InterPro" id="IPR050065">
    <property type="entry name" value="GlmU-like"/>
</dbReference>
<dbReference type="InterPro" id="IPR038009">
    <property type="entry name" value="GlmU_C_LbH"/>
</dbReference>
<dbReference type="InterPro" id="IPR025877">
    <property type="entry name" value="MobA-like_NTP_Trfase"/>
</dbReference>
<dbReference type="InterPro" id="IPR029044">
    <property type="entry name" value="Nucleotide-diphossugar_trans"/>
</dbReference>
<dbReference type="InterPro" id="IPR011004">
    <property type="entry name" value="Trimer_LpxA-like_sf"/>
</dbReference>
<dbReference type="NCBIfam" id="TIGR01173">
    <property type="entry name" value="glmU"/>
    <property type="match status" value="1"/>
</dbReference>
<dbReference type="NCBIfam" id="NF010940">
    <property type="entry name" value="PRK14360.1"/>
    <property type="match status" value="1"/>
</dbReference>
<dbReference type="PANTHER" id="PTHR43584:SF3">
    <property type="entry name" value="BIFUNCTIONAL PROTEIN GLMU"/>
    <property type="match status" value="1"/>
</dbReference>
<dbReference type="PANTHER" id="PTHR43584">
    <property type="entry name" value="NUCLEOTIDYL TRANSFERASE"/>
    <property type="match status" value="1"/>
</dbReference>
<dbReference type="Pfam" id="PF12804">
    <property type="entry name" value="NTP_transf_3"/>
    <property type="match status" value="1"/>
</dbReference>
<dbReference type="SUPFAM" id="SSF53448">
    <property type="entry name" value="Nucleotide-diphospho-sugar transferases"/>
    <property type="match status" value="1"/>
</dbReference>
<dbReference type="SUPFAM" id="SSF51161">
    <property type="entry name" value="Trimeric LpxA-like enzymes"/>
    <property type="match status" value="1"/>
</dbReference>
<feature type="chain" id="PRO_0000244301" description="Bifunctional protein GlmU">
    <location>
        <begin position="1"/>
        <end position="449"/>
    </location>
</feature>
<feature type="region of interest" description="Pyrophosphorylase" evidence="1">
    <location>
        <begin position="1"/>
        <end position="225"/>
    </location>
</feature>
<feature type="region of interest" description="Linker" evidence="1">
    <location>
        <begin position="226"/>
        <end position="246"/>
    </location>
</feature>
<feature type="region of interest" description="N-acetyltransferase" evidence="1">
    <location>
        <begin position="247"/>
        <end position="449"/>
    </location>
</feature>
<feature type="active site" description="Proton acceptor" evidence="1">
    <location>
        <position position="358"/>
    </location>
</feature>
<feature type="binding site" evidence="1">
    <location>
        <begin position="7"/>
        <end position="10"/>
    </location>
    <ligand>
        <name>UDP-N-acetyl-alpha-D-glucosamine</name>
        <dbReference type="ChEBI" id="CHEBI:57705"/>
    </ligand>
</feature>
<feature type="binding site" evidence="1">
    <location>
        <position position="21"/>
    </location>
    <ligand>
        <name>UDP-N-acetyl-alpha-D-glucosamine</name>
        <dbReference type="ChEBI" id="CHEBI:57705"/>
    </ligand>
</feature>
<feature type="binding site" evidence="1">
    <location>
        <position position="73"/>
    </location>
    <ligand>
        <name>UDP-N-acetyl-alpha-D-glucosamine</name>
        <dbReference type="ChEBI" id="CHEBI:57705"/>
    </ligand>
</feature>
<feature type="binding site" evidence="1">
    <location>
        <begin position="78"/>
        <end position="79"/>
    </location>
    <ligand>
        <name>UDP-N-acetyl-alpha-D-glucosamine</name>
        <dbReference type="ChEBI" id="CHEBI:57705"/>
    </ligand>
</feature>
<feature type="binding site" evidence="1">
    <location>
        <position position="103"/>
    </location>
    <ligand>
        <name>Mg(2+)</name>
        <dbReference type="ChEBI" id="CHEBI:18420"/>
    </ligand>
</feature>
<feature type="binding site" evidence="1">
    <location>
        <position position="140"/>
    </location>
    <ligand>
        <name>UDP-N-acetyl-alpha-D-glucosamine</name>
        <dbReference type="ChEBI" id="CHEBI:57705"/>
    </ligand>
</feature>
<feature type="binding site" evidence="1">
    <location>
        <position position="154"/>
    </location>
    <ligand>
        <name>UDP-N-acetyl-alpha-D-glucosamine</name>
        <dbReference type="ChEBI" id="CHEBI:57705"/>
    </ligand>
</feature>
<feature type="binding site" evidence="1">
    <location>
        <position position="169"/>
    </location>
    <ligand>
        <name>UDP-N-acetyl-alpha-D-glucosamine</name>
        <dbReference type="ChEBI" id="CHEBI:57705"/>
    </ligand>
</feature>
<feature type="binding site" evidence="1">
    <location>
        <position position="223"/>
    </location>
    <ligand>
        <name>Mg(2+)</name>
        <dbReference type="ChEBI" id="CHEBI:18420"/>
    </ligand>
</feature>
<feature type="binding site" evidence="1">
    <location>
        <position position="223"/>
    </location>
    <ligand>
        <name>UDP-N-acetyl-alpha-D-glucosamine</name>
        <dbReference type="ChEBI" id="CHEBI:57705"/>
    </ligand>
</feature>
<feature type="binding site" evidence="1">
    <location>
        <position position="328"/>
    </location>
    <ligand>
        <name>UDP-N-acetyl-alpha-D-glucosamine</name>
        <dbReference type="ChEBI" id="CHEBI:57705"/>
    </ligand>
</feature>
<feature type="binding site" evidence="1">
    <location>
        <position position="346"/>
    </location>
    <ligand>
        <name>UDP-N-acetyl-alpha-D-glucosamine</name>
        <dbReference type="ChEBI" id="CHEBI:57705"/>
    </ligand>
</feature>
<feature type="binding site" evidence="1">
    <location>
        <position position="361"/>
    </location>
    <ligand>
        <name>UDP-N-acetyl-alpha-D-glucosamine</name>
        <dbReference type="ChEBI" id="CHEBI:57705"/>
    </ligand>
</feature>
<feature type="binding site" evidence="1">
    <location>
        <position position="372"/>
    </location>
    <ligand>
        <name>UDP-N-acetyl-alpha-D-glucosamine</name>
        <dbReference type="ChEBI" id="CHEBI:57705"/>
    </ligand>
</feature>
<feature type="binding site" evidence="1">
    <location>
        <position position="375"/>
    </location>
    <ligand>
        <name>acetyl-CoA</name>
        <dbReference type="ChEBI" id="CHEBI:57288"/>
    </ligand>
</feature>
<feature type="binding site" evidence="1">
    <location>
        <position position="418"/>
    </location>
    <ligand>
        <name>acetyl-CoA</name>
        <dbReference type="ChEBI" id="CHEBI:57288"/>
    </ligand>
</feature>
<feature type="binding site" evidence="1">
    <location>
        <position position="435"/>
    </location>
    <ligand>
        <name>acetyl-CoA</name>
        <dbReference type="ChEBI" id="CHEBI:57288"/>
    </ligand>
</feature>
<organism>
    <name type="scientific">Prochlorococcus marinus (strain MIT 9312)</name>
    <dbReference type="NCBI Taxonomy" id="74546"/>
    <lineage>
        <taxon>Bacteria</taxon>
        <taxon>Bacillati</taxon>
        <taxon>Cyanobacteriota</taxon>
        <taxon>Cyanophyceae</taxon>
        <taxon>Synechococcales</taxon>
        <taxon>Prochlorococcaceae</taxon>
        <taxon>Prochlorococcus</taxon>
    </lineage>
</organism>
<reference key="1">
    <citation type="journal article" date="2006" name="Science">
        <title>Genomic islands and the ecology and evolution of Prochlorococcus.</title>
        <authorList>
            <person name="Coleman M.L."/>
            <person name="Sullivan M.B."/>
            <person name="Martiny A.C."/>
            <person name="Steglich C."/>
            <person name="Barry K."/>
            <person name="Delong E.F."/>
            <person name="Chisholm S.W."/>
        </authorList>
    </citation>
    <scope>NUCLEOTIDE SEQUENCE [LARGE SCALE GENOMIC DNA]</scope>
    <source>
        <strain>MIT 9312</strain>
    </source>
</reference>